<feature type="initiator methionine" description="Removed" evidence="1">
    <location>
        <position position="1"/>
    </location>
</feature>
<feature type="chain" id="PRO_0000424968" description="Profilin-6">
    <location>
        <begin position="2"/>
        <end position="131"/>
    </location>
</feature>
<feature type="short sequence motif" description="Involved in PIP2 interaction">
    <location>
        <begin position="81"/>
        <end position="97"/>
    </location>
</feature>
<feature type="modified residue" description="Phosphothreonine" evidence="1">
    <location>
        <position position="111"/>
    </location>
</feature>
<feature type="disulfide bond" evidence="3">
    <location>
        <begin position="13"/>
        <end position="115"/>
    </location>
</feature>
<sequence>MSWQAYVDEHLMCEIEGHHLASAAILGHDGTVWAQSADFPQFKPEEITGIMKDFDEPGHLAPTGMFVAAAKYMVIQGEPGVVIRGKKGAGGITIKKTGQALVVGIYDEPMTPGQCDMVVGRLGDYLLEQGL</sequence>
<protein>
    <recommendedName>
        <fullName>Profilin-6</fullName>
    </recommendedName>
    <alternativeName>
        <fullName>Allergen Cor a 2</fullName>
    </alternativeName>
    <alternativeName>
        <fullName>Pollen allergen Cor a 2</fullName>
    </alternativeName>
    <allergenName>Cor a 2</allergenName>
</protein>
<keyword id="KW-0009">Actin-binding</keyword>
<keyword id="KW-0020">Allergen</keyword>
<keyword id="KW-0963">Cytoplasm</keyword>
<keyword id="KW-0206">Cytoskeleton</keyword>
<keyword id="KW-1015">Disulfide bond</keyword>
<keyword id="KW-0597">Phosphoprotein</keyword>
<comment type="function">
    <text evidence="1">Binds to actin and affects the structure of the cytoskeleton. At high concentrations, profilin prevents the polymerization of actin, whereas it enhances it at low concentrations (By similarity).</text>
</comment>
<comment type="subunit">
    <text evidence="1">Occurs in many kinds of cells as a complex with monomeric actin in a 1:1 ratio.</text>
</comment>
<comment type="subcellular location">
    <subcellularLocation>
        <location evidence="1">Cytoplasm</location>
        <location evidence="1">Cytoskeleton</location>
    </subcellularLocation>
</comment>
<comment type="PTM">
    <text evidence="1">Phosphorylated by MAP kinases.</text>
</comment>
<comment type="polymorphism">
    <text>Several isoforms of the allergen exist due to polymorphism.</text>
</comment>
<comment type="allergen">
    <text>Causes an allergic reaction in human.</text>
</comment>
<comment type="miscellaneous">
    <text evidence="3">The variability of the residues taking part of IgE-binding epitopes might be responsible of the difference in cross-reactivity among olive pollen cultivars, and between distantly related pollen species, leading to a variable range of allergy reactions among atopic patients.</text>
</comment>
<comment type="similarity">
    <text evidence="2">Belongs to the profilin family.</text>
</comment>
<organism>
    <name type="scientific">Corylus avellana</name>
    <name type="common">European hazel</name>
    <name type="synonym">Corylus maxima</name>
    <dbReference type="NCBI Taxonomy" id="13451"/>
    <lineage>
        <taxon>Eukaryota</taxon>
        <taxon>Viridiplantae</taxon>
        <taxon>Streptophyta</taxon>
        <taxon>Embryophyta</taxon>
        <taxon>Tracheophyta</taxon>
        <taxon>Spermatophyta</taxon>
        <taxon>Magnoliopsida</taxon>
        <taxon>eudicotyledons</taxon>
        <taxon>Gunneridae</taxon>
        <taxon>Pentapetalae</taxon>
        <taxon>rosids</taxon>
        <taxon>fabids</taxon>
        <taxon>Fagales</taxon>
        <taxon>Betulaceae</taxon>
        <taxon>Corylus</taxon>
    </lineage>
</organism>
<name>PROF6_CORAV</name>
<proteinExistence type="evidence at protein level"/>
<accession>A4KA43</accession>
<reference key="1">
    <citation type="journal article" date="2012" name="PLoS ONE">
        <title>Characterization of profilin polymorphism in pollen with a focus on multifunctionality.</title>
        <authorList>
            <person name="Jimenez-Lopez J.C."/>
            <person name="Morales S."/>
            <person name="Castro A.J."/>
            <person name="Volkmann D."/>
            <person name="Rodriguez-Garcia M.I."/>
            <person name="Alche Jde D."/>
        </authorList>
    </citation>
    <scope>NUCLEOTIDE SEQUENCE [MRNA]</scope>
    <scope>POLYMORPHISM</scope>
    <source>
        <strain>cv. Avellana</strain>
    </source>
</reference>
<reference key="2">
    <citation type="journal article" date="2013" name="PLoS ONE">
        <title>Analysis of the effects of polymorphism on pollen profilin structural functionality and the generation of conformational, T- and B-cell epitopes.</title>
        <authorList>
            <person name="Jimenez-Lopez J.C."/>
            <person name="Rodriguez-Garcia M.I."/>
            <person name="Alche J.D."/>
        </authorList>
    </citation>
    <scope>3D-STRUCTURE MODELING</scope>
    <scope>DISULFIDE BOND</scope>
</reference>
<dbReference type="EMBL" id="DQ663547">
    <property type="protein sequence ID" value="ABG81300.1"/>
    <property type="molecule type" value="mRNA"/>
</dbReference>
<dbReference type="SMR" id="A4KA43"/>
<dbReference type="Allergome" id="244">
    <property type="allergen name" value="Cor a 2"/>
</dbReference>
<dbReference type="GO" id="GO:0005938">
    <property type="term" value="C:cell cortex"/>
    <property type="evidence" value="ECO:0007669"/>
    <property type="project" value="TreeGrafter"/>
</dbReference>
<dbReference type="GO" id="GO:0005856">
    <property type="term" value="C:cytoskeleton"/>
    <property type="evidence" value="ECO:0007669"/>
    <property type="project" value="UniProtKB-SubCell"/>
</dbReference>
<dbReference type="GO" id="GO:0003785">
    <property type="term" value="F:actin monomer binding"/>
    <property type="evidence" value="ECO:0007669"/>
    <property type="project" value="TreeGrafter"/>
</dbReference>
<dbReference type="CDD" id="cd00148">
    <property type="entry name" value="PROF"/>
    <property type="match status" value="1"/>
</dbReference>
<dbReference type="FunFam" id="3.30.450.30:FF:000001">
    <property type="entry name" value="Profilin"/>
    <property type="match status" value="1"/>
</dbReference>
<dbReference type="Gene3D" id="3.30.450.30">
    <property type="entry name" value="Dynein light chain 2a, cytoplasmic"/>
    <property type="match status" value="1"/>
</dbReference>
<dbReference type="InterPro" id="IPR048278">
    <property type="entry name" value="PFN"/>
</dbReference>
<dbReference type="InterPro" id="IPR005455">
    <property type="entry name" value="PFN_euk"/>
</dbReference>
<dbReference type="InterPro" id="IPR036140">
    <property type="entry name" value="PFN_sf"/>
</dbReference>
<dbReference type="InterPro" id="IPR027310">
    <property type="entry name" value="Profilin_CS"/>
</dbReference>
<dbReference type="PANTHER" id="PTHR11604">
    <property type="entry name" value="PROFILIN"/>
    <property type="match status" value="1"/>
</dbReference>
<dbReference type="PANTHER" id="PTHR11604:SF31">
    <property type="entry name" value="PROFILIN"/>
    <property type="match status" value="1"/>
</dbReference>
<dbReference type="Pfam" id="PF00235">
    <property type="entry name" value="Profilin"/>
    <property type="match status" value="1"/>
</dbReference>
<dbReference type="PRINTS" id="PR00392">
    <property type="entry name" value="PROFILIN"/>
</dbReference>
<dbReference type="PRINTS" id="PR01640">
    <property type="entry name" value="PROFILINPLNT"/>
</dbReference>
<dbReference type="SMART" id="SM00392">
    <property type="entry name" value="PROF"/>
    <property type="match status" value="1"/>
</dbReference>
<dbReference type="SUPFAM" id="SSF55770">
    <property type="entry name" value="Profilin (actin-binding protein)"/>
    <property type="match status" value="1"/>
</dbReference>
<dbReference type="PROSITE" id="PS00414">
    <property type="entry name" value="PROFILIN"/>
    <property type="match status" value="1"/>
</dbReference>
<evidence type="ECO:0000250" key="1"/>
<evidence type="ECO:0000305" key="2"/>
<evidence type="ECO:0000305" key="3">
    <source>
    </source>
</evidence>